<keyword id="KW-0963">Cytoplasm</keyword>
<keyword id="KW-0255">Endonuclease</keyword>
<keyword id="KW-0378">Hydrolase</keyword>
<keyword id="KW-0460">Magnesium</keyword>
<keyword id="KW-0479">Metal-binding</keyword>
<keyword id="KW-0507">mRNA processing</keyword>
<keyword id="KW-0540">Nuclease</keyword>
<keyword id="KW-0694">RNA-binding</keyword>
<keyword id="KW-0698">rRNA processing</keyword>
<keyword id="KW-0699">rRNA-binding</keyword>
<keyword id="KW-0819">tRNA processing</keyword>
<accession>Q3ZXY9</accession>
<organism>
    <name type="scientific">Dehalococcoides mccartyi (strain CBDB1)</name>
    <dbReference type="NCBI Taxonomy" id="255470"/>
    <lineage>
        <taxon>Bacteria</taxon>
        <taxon>Bacillati</taxon>
        <taxon>Chloroflexota</taxon>
        <taxon>Dehalococcoidia</taxon>
        <taxon>Dehalococcoidales</taxon>
        <taxon>Dehalococcoidaceae</taxon>
        <taxon>Dehalococcoides</taxon>
    </lineage>
</organism>
<protein>
    <recommendedName>
        <fullName evidence="1">Ribonuclease 3</fullName>
        <ecNumber evidence="1">3.1.26.3</ecNumber>
    </recommendedName>
    <alternativeName>
        <fullName evidence="1">Ribonuclease III</fullName>
        <shortName evidence="1">RNase III</shortName>
    </alternativeName>
</protein>
<proteinExistence type="inferred from homology"/>
<comment type="function">
    <text evidence="1">Digests double-stranded RNA. Involved in the processing of primary rRNA transcript to yield the immediate precursors to the large and small rRNAs (23S and 16S). Processes some mRNAs, and tRNAs when they are encoded in the rRNA operon. Processes pre-crRNA and tracrRNA of type II CRISPR loci if present in the organism.</text>
</comment>
<comment type="catalytic activity">
    <reaction evidence="1">
        <text>Endonucleolytic cleavage to 5'-phosphomonoester.</text>
        <dbReference type="EC" id="3.1.26.3"/>
    </reaction>
</comment>
<comment type="cofactor">
    <cofactor evidence="1">
        <name>Mg(2+)</name>
        <dbReference type="ChEBI" id="CHEBI:18420"/>
    </cofactor>
</comment>
<comment type="subunit">
    <text evidence="1">Homodimer.</text>
</comment>
<comment type="subcellular location">
    <subcellularLocation>
        <location evidence="1">Cytoplasm</location>
    </subcellularLocation>
</comment>
<comment type="similarity">
    <text evidence="1">Belongs to the ribonuclease III family.</text>
</comment>
<dbReference type="EC" id="3.1.26.3" evidence="1"/>
<dbReference type="EMBL" id="AJ965256">
    <property type="protein sequence ID" value="CAI83111.1"/>
    <property type="molecule type" value="Genomic_DNA"/>
</dbReference>
<dbReference type="SMR" id="Q3ZXY9"/>
<dbReference type="KEGG" id="deh:cbdbA994"/>
<dbReference type="HOGENOM" id="CLU_000907_1_3_0"/>
<dbReference type="Proteomes" id="UP000000433">
    <property type="component" value="Chromosome"/>
</dbReference>
<dbReference type="GO" id="GO:0005737">
    <property type="term" value="C:cytoplasm"/>
    <property type="evidence" value="ECO:0007669"/>
    <property type="project" value="UniProtKB-SubCell"/>
</dbReference>
<dbReference type="GO" id="GO:0003725">
    <property type="term" value="F:double-stranded RNA binding"/>
    <property type="evidence" value="ECO:0007669"/>
    <property type="project" value="TreeGrafter"/>
</dbReference>
<dbReference type="GO" id="GO:0046872">
    <property type="term" value="F:metal ion binding"/>
    <property type="evidence" value="ECO:0007669"/>
    <property type="project" value="UniProtKB-KW"/>
</dbReference>
<dbReference type="GO" id="GO:0004525">
    <property type="term" value="F:ribonuclease III activity"/>
    <property type="evidence" value="ECO:0007669"/>
    <property type="project" value="UniProtKB-UniRule"/>
</dbReference>
<dbReference type="GO" id="GO:0019843">
    <property type="term" value="F:rRNA binding"/>
    <property type="evidence" value="ECO:0007669"/>
    <property type="project" value="UniProtKB-KW"/>
</dbReference>
<dbReference type="GO" id="GO:0006397">
    <property type="term" value="P:mRNA processing"/>
    <property type="evidence" value="ECO:0007669"/>
    <property type="project" value="UniProtKB-UniRule"/>
</dbReference>
<dbReference type="GO" id="GO:0010468">
    <property type="term" value="P:regulation of gene expression"/>
    <property type="evidence" value="ECO:0007669"/>
    <property type="project" value="TreeGrafter"/>
</dbReference>
<dbReference type="GO" id="GO:0006364">
    <property type="term" value="P:rRNA processing"/>
    <property type="evidence" value="ECO:0007669"/>
    <property type="project" value="UniProtKB-UniRule"/>
</dbReference>
<dbReference type="GO" id="GO:0008033">
    <property type="term" value="P:tRNA processing"/>
    <property type="evidence" value="ECO:0007669"/>
    <property type="project" value="UniProtKB-KW"/>
</dbReference>
<dbReference type="CDD" id="cd10845">
    <property type="entry name" value="DSRM_RNAse_III_family"/>
    <property type="match status" value="1"/>
</dbReference>
<dbReference type="CDD" id="cd00593">
    <property type="entry name" value="RIBOc"/>
    <property type="match status" value="1"/>
</dbReference>
<dbReference type="FunFam" id="1.10.1520.10:FF:000001">
    <property type="entry name" value="Ribonuclease 3"/>
    <property type="match status" value="1"/>
</dbReference>
<dbReference type="FunFam" id="3.30.160.20:FF:000003">
    <property type="entry name" value="Ribonuclease 3"/>
    <property type="match status" value="1"/>
</dbReference>
<dbReference type="Gene3D" id="3.30.160.20">
    <property type="match status" value="1"/>
</dbReference>
<dbReference type="Gene3D" id="1.10.1520.10">
    <property type="entry name" value="Ribonuclease III domain"/>
    <property type="match status" value="1"/>
</dbReference>
<dbReference type="HAMAP" id="MF_00104">
    <property type="entry name" value="RNase_III"/>
    <property type="match status" value="1"/>
</dbReference>
<dbReference type="InterPro" id="IPR014720">
    <property type="entry name" value="dsRBD_dom"/>
</dbReference>
<dbReference type="InterPro" id="IPR011907">
    <property type="entry name" value="RNase_III"/>
</dbReference>
<dbReference type="InterPro" id="IPR000999">
    <property type="entry name" value="RNase_III_dom"/>
</dbReference>
<dbReference type="InterPro" id="IPR036389">
    <property type="entry name" value="RNase_III_sf"/>
</dbReference>
<dbReference type="NCBIfam" id="TIGR02191">
    <property type="entry name" value="RNaseIII"/>
    <property type="match status" value="1"/>
</dbReference>
<dbReference type="PANTHER" id="PTHR11207:SF0">
    <property type="entry name" value="RIBONUCLEASE 3"/>
    <property type="match status" value="1"/>
</dbReference>
<dbReference type="PANTHER" id="PTHR11207">
    <property type="entry name" value="RIBONUCLEASE III"/>
    <property type="match status" value="1"/>
</dbReference>
<dbReference type="Pfam" id="PF00035">
    <property type="entry name" value="dsrm"/>
    <property type="match status" value="1"/>
</dbReference>
<dbReference type="Pfam" id="PF14622">
    <property type="entry name" value="Ribonucleas_3_3"/>
    <property type="match status" value="1"/>
</dbReference>
<dbReference type="SMART" id="SM00358">
    <property type="entry name" value="DSRM"/>
    <property type="match status" value="1"/>
</dbReference>
<dbReference type="SMART" id="SM00535">
    <property type="entry name" value="RIBOc"/>
    <property type="match status" value="1"/>
</dbReference>
<dbReference type="SUPFAM" id="SSF54768">
    <property type="entry name" value="dsRNA-binding domain-like"/>
    <property type="match status" value="1"/>
</dbReference>
<dbReference type="SUPFAM" id="SSF69065">
    <property type="entry name" value="RNase III domain-like"/>
    <property type="match status" value="1"/>
</dbReference>
<dbReference type="PROSITE" id="PS50137">
    <property type="entry name" value="DS_RBD"/>
    <property type="match status" value="1"/>
</dbReference>
<dbReference type="PROSITE" id="PS00517">
    <property type="entry name" value="RNASE_3_1"/>
    <property type="match status" value="1"/>
</dbReference>
<dbReference type="PROSITE" id="PS50142">
    <property type="entry name" value="RNASE_3_2"/>
    <property type="match status" value="1"/>
</dbReference>
<sequence length="237" mass="26939">MLDLTELENSLGVKFEQPSLLEQALIHTSWVNENPNHSSGSNERMEFLGDAVLGVIFADRLYHDFPDIQEGDLTRFRSLLVRRESLVRVALGINLGKYLYLGRGEDVSKGRFKPANLAGAFEAVLAAIYIDKGMDVTREVIFRLFKTEMERVQTLSSNIDYKSRLQELIQAQLQLTPRYRITNFSGPEHNRLFIAEVYAEDRVFAEGSGRSKKEAETNAAKVALQQFENSFTDEDNI</sequence>
<reference key="1">
    <citation type="journal article" date="2005" name="Nat. Biotechnol.">
        <title>Genome sequence of the chlorinated compound-respiring bacterium Dehalococcoides species strain CBDB1.</title>
        <authorList>
            <person name="Kube M."/>
            <person name="Beck A."/>
            <person name="Zinder S.H."/>
            <person name="Kuhl H."/>
            <person name="Reinhardt R."/>
            <person name="Adrian L."/>
        </authorList>
    </citation>
    <scope>NUCLEOTIDE SEQUENCE [LARGE SCALE GENOMIC DNA]</scope>
    <source>
        <strain>CBDB1</strain>
    </source>
</reference>
<name>RNC_DEHMC</name>
<evidence type="ECO:0000255" key="1">
    <source>
        <dbReference type="HAMAP-Rule" id="MF_00104"/>
    </source>
</evidence>
<gene>
    <name evidence="1" type="primary">rnc</name>
    <name type="ordered locus">cbdbA994</name>
</gene>
<feature type="chain" id="PRO_0000228523" description="Ribonuclease 3">
    <location>
        <begin position="1"/>
        <end position="237"/>
    </location>
</feature>
<feature type="domain" description="RNase III" evidence="1">
    <location>
        <begin position="4"/>
        <end position="133"/>
    </location>
</feature>
<feature type="domain" description="DRBM" evidence="1">
    <location>
        <begin position="160"/>
        <end position="229"/>
    </location>
</feature>
<feature type="active site" evidence="1">
    <location>
        <position position="50"/>
    </location>
</feature>
<feature type="active site" evidence="1">
    <location>
        <position position="122"/>
    </location>
</feature>
<feature type="binding site" evidence="1">
    <location>
        <position position="46"/>
    </location>
    <ligand>
        <name>Mg(2+)</name>
        <dbReference type="ChEBI" id="CHEBI:18420"/>
    </ligand>
</feature>
<feature type="binding site" evidence="1">
    <location>
        <position position="122"/>
    </location>
    <ligand>
        <name>Mg(2+)</name>
        <dbReference type="ChEBI" id="CHEBI:18420"/>
    </ligand>
</feature>